<dbReference type="EMBL" id="AK014532">
    <property type="protein sequence ID" value="BAB29415.1"/>
    <property type="status" value="ALT_FRAME"/>
    <property type="molecule type" value="mRNA"/>
</dbReference>
<dbReference type="EMBL" id="AK086025">
    <property type="protein sequence ID" value="BAC39595.1"/>
    <property type="molecule type" value="mRNA"/>
</dbReference>
<dbReference type="EMBL" id="AK146580">
    <property type="protein sequence ID" value="BAE27276.1"/>
    <property type="molecule type" value="mRNA"/>
</dbReference>
<dbReference type="EMBL" id="BC115428">
    <property type="protein sequence ID" value="AAI15429.1"/>
    <property type="molecule type" value="mRNA"/>
</dbReference>
<dbReference type="EMBL" id="BC115429">
    <property type="protein sequence ID" value="AAI15430.1"/>
    <property type="molecule type" value="mRNA"/>
</dbReference>
<dbReference type="CCDS" id="CCDS15161.1"/>
<dbReference type="RefSeq" id="NP_081827.1">
    <property type="nucleotide sequence ID" value="NM_027551.2"/>
</dbReference>
<dbReference type="SMR" id="Q8C3F7"/>
<dbReference type="FunCoup" id="Q8C3F7">
    <property type="interactions" value="1"/>
</dbReference>
<dbReference type="STRING" id="10090.ENSMUSP00000027533"/>
<dbReference type="PhosphoSitePlus" id="Q8C3F7"/>
<dbReference type="PaxDb" id="10090-ENSMUSP00000027533"/>
<dbReference type="PeptideAtlas" id="Q8C3F7"/>
<dbReference type="ProteomicsDB" id="263627"/>
<dbReference type="Antibodypedia" id="50046">
    <property type="antibodies" value="74 antibodies from 13 providers"/>
</dbReference>
<dbReference type="DNASU" id="70788"/>
<dbReference type="Ensembl" id="ENSMUST00000027533.9">
    <property type="protein sequence ID" value="ENSMUSP00000027533.9"/>
    <property type="gene ID" value="ENSMUSG00000026308.9"/>
</dbReference>
<dbReference type="GeneID" id="70788"/>
<dbReference type="KEGG" id="mmu:70788"/>
<dbReference type="UCSC" id="uc007cai.1">
    <property type="organism name" value="mouse"/>
</dbReference>
<dbReference type="AGR" id="MGI:1918038"/>
<dbReference type="CTD" id="377007"/>
<dbReference type="MGI" id="MGI:1918038">
    <property type="gene designation" value="Klhl30"/>
</dbReference>
<dbReference type="VEuPathDB" id="HostDB:ENSMUSG00000026308"/>
<dbReference type="eggNOG" id="KOG4441">
    <property type="taxonomic scope" value="Eukaryota"/>
</dbReference>
<dbReference type="GeneTree" id="ENSGT00940000158597"/>
<dbReference type="HOGENOM" id="CLU_004253_14_6_1"/>
<dbReference type="InParanoid" id="Q8C3F7"/>
<dbReference type="OMA" id="WFYSGVC"/>
<dbReference type="OrthoDB" id="6482909at2759"/>
<dbReference type="PhylomeDB" id="Q8C3F7"/>
<dbReference type="TreeFam" id="TF329218"/>
<dbReference type="BioGRID-ORCS" id="70788">
    <property type="hits" value="1 hit in 77 CRISPR screens"/>
</dbReference>
<dbReference type="PRO" id="PR:Q8C3F7"/>
<dbReference type="Proteomes" id="UP000000589">
    <property type="component" value="Chromosome 1"/>
</dbReference>
<dbReference type="RNAct" id="Q8C3F7">
    <property type="molecule type" value="protein"/>
</dbReference>
<dbReference type="Bgee" id="ENSMUSG00000026308">
    <property type="expression patterns" value="Expressed in knee joint and 90 other cell types or tissues"/>
</dbReference>
<dbReference type="CDD" id="cd18469">
    <property type="entry name" value="BACK_KLHL30"/>
    <property type="match status" value="1"/>
</dbReference>
<dbReference type="FunFam" id="1.25.40.420:FF:000001">
    <property type="entry name" value="Kelch-like family member 12"/>
    <property type="match status" value="1"/>
</dbReference>
<dbReference type="Gene3D" id="1.25.40.420">
    <property type="match status" value="1"/>
</dbReference>
<dbReference type="Gene3D" id="2.120.10.80">
    <property type="entry name" value="Kelch-type beta propeller"/>
    <property type="match status" value="1"/>
</dbReference>
<dbReference type="Gene3D" id="3.30.710.10">
    <property type="entry name" value="Potassium Channel Kv1.1, Chain A"/>
    <property type="match status" value="1"/>
</dbReference>
<dbReference type="InterPro" id="IPR011705">
    <property type="entry name" value="BACK"/>
</dbReference>
<dbReference type="InterPro" id="IPR017096">
    <property type="entry name" value="BTB-kelch_protein"/>
</dbReference>
<dbReference type="InterPro" id="IPR000210">
    <property type="entry name" value="BTB/POZ_dom"/>
</dbReference>
<dbReference type="InterPro" id="IPR015915">
    <property type="entry name" value="Kelch-typ_b-propeller"/>
</dbReference>
<dbReference type="InterPro" id="IPR006652">
    <property type="entry name" value="Kelch_1"/>
</dbReference>
<dbReference type="InterPro" id="IPR030582">
    <property type="entry name" value="KLHL30_BACK"/>
</dbReference>
<dbReference type="InterPro" id="IPR011333">
    <property type="entry name" value="SKP1/BTB/POZ_sf"/>
</dbReference>
<dbReference type="PANTHER" id="PTHR24412">
    <property type="entry name" value="KELCH PROTEIN"/>
    <property type="match status" value="1"/>
</dbReference>
<dbReference type="PANTHER" id="PTHR24412:SF398">
    <property type="entry name" value="KELCH-LIKE PROTEIN 30"/>
    <property type="match status" value="1"/>
</dbReference>
<dbReference type="Pfam" id="PF07707">
    <property type="entry name" value="BACK"/>
    <property type="match status" value="1"/>
</dbReference>
<dbReference type="Pfam" id="PF00651">
    <property type="entry name" value="BTB"/>
    <property type="match status" value="1"/>
</dbReference>
<dbReference type="Pfam" id="PF01344">
    <property type="entry name" value="Kelch_1"/>
    <property type="match status" value="1"/>
</dbReference>
<dbReference type="PIRSF" id="PIRSF037037">
    <property type="entry name" value="Kelch-like_protein_gigaxonin"/>
    <property type="match status" value="1"/>
</dbReference>
<dbReference type="SMART" id="SM00875">
    <property type="entry name" value="BACK"/>
    <property type="match status" value="1"/>
</dbReference>
<dbReference type="SMART" id="SM00225">
    <property type="entry name" value="BTB"/>
    <property type="match status" value="1"/>
</dbReference>
<dbReference type="SMART" id="SM00612">
    <property type="entry name" value="Kelch"/>
    <property type="match status" value="4"/>
</dbReference>
<dbReference type="SUPFAM" id="SSF117281">
    <property type="entry name" value="Kelch motif"/>
    <property type="match status" value="1"/>
</dbReference>
<dbReference type="SUPFAM" id="SSF54695">
    <property type="entry name" value="POZ domain"/>
    <property type="match status" value="1"/>
</dbReference>
<dbReference type="PROSITE" id="PS50097">
    <property type="entry name" value="BTB"/>
    <property type="match status" value="1"/>
</dbReference>
<evidence type="ECO:0000255" key="1">
    <source>
        <dbReference type="PROSITE-ProRule" id="PRU00037"/>
    </source>
</evidence>
<evidence type="ECO:0000305" key="2"/>
<accession>Q8C3F7</accession>
<accession>Q9D692</accession>
<reference key="1">
    <citation type="journal article" date="2005" name="Science">
        <title>The transcriptional landscape of the mammalian genome.</title>
        <authorList>
            <person name="Carninci P."/>
            <person name="Kasukawa T."/>
            <person name="Katayama S."/>
            <person name="Gough J."/>
            <person name="Frith M.C."/>
            <person name="Maeda N."/>
            <person name="Oyama R."/>
            <person name="Ravasi T."/>
            <person name="Lenhard B."/>
            <person name="Wells C."/>
            <person name="Kodzius R."/>
            <person name="Shimokawa K."/>
            <person name="Bajic V.B."/>
            <person name="Brenner S.E."/>
            <person name="Batalov S."/>
            <person name="Forrest A.R."/>
            <person name="Zavolan M."/>
            <person name="Davis M.J."/>
            <person name="Wilming L.G."/>
            <person name="Aidinis V."/>
            <person name="Allen J.E."/>
            <person name="Ambesi-Impiombato A."/>
            <person name="Apweiler R."/>
            <person name="Aturaliya R.N."/>
            <person name="Bailey T.L."/>
            <person name="Bansal M."/>
            <person name="Baxter L."/>
            <person name="Beisel K.W."/>
            <person name="Bersano T."/>
            <person name="Bono H."/>
            <person name="Chalk A.M."/>
            <person name="Chiu K.P."/>
            <person name="Choudhary V."/>
            <person name="Christoffels A."/>
            <person name="Clutterbuck D.R."/>
            <person name="Crowe M.L."/>
            <person name="Dalla E."/>
            <person name="Dalrymple B.P."/>
            <person name="de Bono B."/>
            <person name="Della Gatta G."/>
            <person name="di Bernardo D."/>
            <person name="Down T."/>
            <person name="Engstrom P."/>
            <person name="Fagiolini M."/>
            <person name="Faulkner G."/>
            <person name="Fletcher C.F."/>
            <person name="Fukushima T."/>
            <person name="Furuno M."/>
            <person name="Futaki S."/>
            <person name="Gariboldi M."/>
            <person name="Georgii-Hemming P."/>
            <person name="Gingeras T.R."/>
            <person name="Gojobori T."/>
            <person name="Green R.E."/>
            <person name="Gustincich S."/>
            <person name="Harbers M."/>
            <person name="Hayashi Y."/>
            <person name="Hensch T.K."/>
            <person name="Hirokawa N."/>
            <person name="Hill D."/>
            <person name="Huminiecki L."/>
            <person name="Iacono M."/>
            <person name="Ikeo K."/>
            <person name="Iwama A."/>
            <person name="Ishikawa T."/>
            <person name="Jakt M."/>
            <person name="Kanapin A."/>
            <person name="Katoh M."/>
            <person name="Kawasawa Y."/>
            <person name="Kelso J."/>
            <person name="Kitamura H."/>
            <person name="Kitano H."/>
            <person name="Kollias G."/>
            <person name="Krishnan S.P."/>
            <person name="Kruger A."/>
            <person name="Kummerfeld S.K."/>
            <person name="Kurochkin I.V."/>
            <person name="Lareau L.F."/>
            <person name="Lazarevic D."/>
            <person name="Lipovich L."/>
            <person name="Liu J."/>
            <person name="Liuni S."/>
            <person name="McWilliam S."/>
            <person name="Madan Babu M."/>
            <person name="Madera M."/>
            <person name="Marchionni L."/>
            <person name="Matsuda H."/>
            <person name="Matsuzawa S."/>
            <person name="Miki H."/>
            <person name="Mignone F."/>
            <person name="Miyake S."/>
            <person name="Morris K."/>
            <person name="Mottagui-Tabar S."/>
            <person name="Mulder N."/>
            <person name="Nakano N."/>
            <person name="Nakauchi H."/>
            <person name="Ng P."/>
            <person name="Nilsson R."/>
            <person name="Nishiguchi S."/>
            <person name="Nishikawa S."/>
            <person name="Nori F."/>
            <person name="Ohara O."/>
            <person name="Okazaki Y."/>
            <person name="Orlando V."/>
            <person name="Pang K.C."/>
            <person name="Pavan W.J."/>
            <person name="Pavesi G."/>
            <person name="Pesole G."/>
            <person name="Petrovsky N."/>
            <person name="Piazza S."/>
            <person name="Reed J."/>
            <person name="Reid J.F."/>
            <person name="Ring B.Z."/>
            <person name="Ringwald M."/>
            <person name="Rost B."/>
            <person name="Ruan Y."/>
            <person name="Salzberg S.L."/>
            <person name="Sandelin A."/>
            <person name="Schneider C."/>
            <person name="Schoenbach C."/>
            <person name="Sekiguchi K."/>
            <person name="Semple C.A."/>
            <person name="Seno S."/>
            <person name="Sessa L."/>
            <person name="Sheng Y."/>
            <person name="Shibata Y."/>
            <person name="Shimada H."/>
            <person name="Shimada K."/>
            <person name="Silva D."/>
            <person name="Sinclair B."/>
            <person name="Sperling S."/>
            <person name="Stupka E."/>
            <person name="Sugiura K."/>
            <person name="Sultana R."/>
            <person name="Takenaka Y."/>
            <person name="Taki K."/>
            <person name="Tammoja K."/>
            <person name="Tan S.L."/>
            <person name="Tang S."/>
            <person name="Taylor M.S."/>
            <person name="Tegner J."/>
            <person name="Teichmann S.A."/>
            <person name="Ueda H.R."/>
            <person name="van Nimwegen E."/>
            <person name="Verardo R."/>
            <person name="Wei C.L."/>
            <person name="Yagi K."/>
            <person name="Yamanishi H."/>
            <person name="Zabarovsky E."/>
            <person name="Zhu S."/>
            <person name="Zimmer A."/>
            <person name="Hide W."/>
            <person name="Bult C."/>
            <person name="Grimmond S.M."/>
            <person name="Teasdale R.D."/>
            <person name="Liu E.T."/>
            <person name="Brusic V."/>
            <person name="Quackenbush J."/>
            <person name="Wahlestedt C."/>
            <person name="Mattick J.S."/>
            <person name="Hume D.A."/>
            <person name="Kai C."/>
            <person name="Sasaki D."/>
            <person name="Tomaru Y."/>
            <person name="Fukuda S."/>
            <person name="Kanamori-Katayama M."/>
            <person name="Suzuki M."/>
            <person name="Aoki J."/>
            <person name="Arakawa T."/>
            <person name="Iida J."/>
            <person name="Imamura K."/>
            <person name="Itoh M."/>
            <person name="Kato T."/>
            <person name="Kawaji H."/>
            <person name="Kawagashira N."/>
            <person name="Kawashima T."/>
            <person name="Kojima M."/>
            <person name="Kondo S."/>
            <person name="Konno H."/>
            <person name="Nakano K."/>
            <person name="Ninomiya N."/>
            <person name="Nishio T."/>
            <person name="Okada M."/>
            <person name="Plessy C."/>
            <person name="Shibata K."/>
            <person name="Shiraki T."/>
            <person name="Suzuki S."/>
            <person name="Tagami M."/>
            <person name="Waki K."/>
            <person name="Watahiki A."/>
            <person name="Okamura-Oho Y."/>
            <person name="Suzuki H."/>
            <person name="Kawai J."/>
            <person name="Hayashizaki Y."/>
        </authorList>
    </citation>
    <scope>NUCLEOTIDE SEQUENCE [LARGE SCALE MRNA]</scope>
    <source>
        <strain>C57BL/6J</strain>
        <tissue>Heart</tissue>
        <tissue>Skin</tissue>
    </source>
</reference>
<reference key="2">
    <citation type="journal article" date="2004" name="Genome Res.">
        <title>The status, quality, and expansion of the NIH full-length cDNA project: the Mammalian Gene Collection (MGC).</title>
        <authorList>
            <consortium name="The MGC Project Team"/>
        </authorList>
    </citation>
    <scope>NUCLEOTIDE SEQUENCE [LARGE SCALE MRNA]</scope>
</reference>
<protein>
    <recommendedName>
        <fullName>Kelch-like protein 30</fullName>
    </recommendedName>
</protein>
<gene>
    <name type="primary">Klhl30</name>
</gene>
<name>KLH30_MOUSE</name>
<comment type="sequence caution" evidence="2">
    <conflict type="frameshift">
        <sequence resource="EMBL-CDS" id="BAB29415"/>
    </conflict>
</comment>
<feature type="chain" id="PRO_0000274595" description="Kelch-like protein 30">
    <location>
        <begin position="1"/>
        <end position="581"/>
    </location>
</feature>
<feature type="domain" description="BTB" evidence="1">
    <location>
        <begin position="33"/>
        <end position="100"/>
    </location>
</feature>
<feature type="domain" description="BACK">
    <location>
        <begin position="135"/>
        <end position="237"/>
    </location>
</feature>
<feature type="repeat" description="Kelch 1">
    <location>
        <begin position="280"/>
        <end position="327"/>
    </location>
</feature>
<feature type="repeat" description="Kelch 2">
    <location>
        <begin position="328"/>
        <end position="378"/>
    </location>
</feature>
<feature type="repeat" description="Kelch 3">
    <location>
        <begin position="379"/>
        <end position="423"/>
    </location>
</feature>
<feature type="repeat" description="Kelch 4">
    <location>
        <begin position="425"/>
        <end position="472"/>
    </location>
</feature>
<feature type="repeat" description="Kelch 5">
    <location>
        <begin position="474"/>
        <end position="514"/>
    </location>
</feature>
<feature type="repeat" description="Kelch 6">
    <location>
        <begin position="515"/>
        <end position="564"/>
    </location>
</feature>
<proteinExistence type="evidence at transcript level"/>
<organism>
    <name type="scientific">Mus musculus</name>
    <name type="common">Mouse</name>
    <dbReference type="NCBI Taxonomy" id="10090"/>
    <lineage>
        <taxon>Eukaryota</taxon>
        <taxon>Metazoa</taxon>
        <taxon>Chordata</taxon>
        <taxon>Craniata</taxon>
        <taxon>Vertebrata</taxon>
        <taxon>Euteleostomi</taxon>
        <taxon>Mammalia</taxon>
        <taxon>Eutheria</taxon>
        <taxon>Euarchontoglires</taxon>
        <taxon>Glires</taxon>
        <taxon>Rodentia</taxon>
        <taxon>Myomorpha</taxon>
        <taxon>Muroidea</taxon>
        <taxon>Muridae</taxon>
        <taxon>Murinae</taxon>
        <taxon>Mus</taxon>
        <taxon>Mus</taxon>
    </lineage>
</organism>
<sequence>MVRNLDDLDFHLPSHAQDMLEGLQRLRSLPKLADVTLLVGDQELPCHRSLLALNSPYFHAMFAGDFTESFLARVELRDVEPAMVGQLVDFVYTGRLTITQANVEALTRSASRLNFPTVQKVCGRYLQQQLDATNCLGICEFGEQQGLLGVAAKAWAFLRENFEAVAQEDEFLQLARDRLATCLASDLLQVQPEQSRLEALLRWVRHDPQDRAAHLPELLSLVHLDAVPRPCVQQLLATEPLIQESEACQEALSQGHSEELPGLPQKMQEVLVVVGGRALEEDEDGGEEPSHHTGNFAFYNTKARQWMALPDFPDYHKWGFSLAALNSDVYVTGGSRGTKTDTWSTTQAWCFPLKEAIWKPVAPMLKARTNHASTALNGEIYAIGGTALDAVEVERYDPYTDSWAPVGPAPKYVSNFSAAGCQGRLYLVGSSACKYNMLALQCYSPVTDAWSVIASPFLPKYLSSPRCAALNGALYLIGDNTKKVYVYDPGANLWQKVQSQHSLHENGALVPLGDLLYVTGGRWQGMDGDYHVEMEAYDTVRDAWARHGSLPRLWLYHGASTIFLDVSKWTQPFIPTAPQEH</sequence>
<keyword id="KW-0880">Kelch repeat</keyword>
<keyword id="KW-1185">Reference proteome</keyword>
<keyword id="KW-0677">Repeat</keyword>